<evidence type="ECO:0000255" key="1"/>
<evidence type="ECO:0000269" key="2">
    <source>
    </source>
</evidence>
<evidence type="ECO:0000269" key="3">
    <source>
    </source>
</evidence>
<evidence type="ECO:0000305" key="4"/>
<sequence length="466" mass="51429">MDVPRPAFKCFDDDGRLKRSGTVWTASAHIITAVIGSGVLSLAWAIGQLGWIAGPTVMLLFSFVTYYSSTLLSDCYRTGDPVSGKRNYTYMDAVRSILGGFRFKICGLIQYLNLFGITVGYTIAASISMMAIKRSNCFHESGGKNPCHMSSNPYMIMFGVTEILLSQIKDFDQIWWLSIVAAIMSFTYSAIGLALGIIQVAANGVVKGSLTGISIGAVTQTQKIWRTFQALGDIAFAYSYSVVLIEIQDTVRSPPAESKTMKIATRISIAVTTTFYMLCGCMGYAAFGDKAPGNLLTGFGFYNPFWLLDVANAAIVIHLVGAYQVFAQPIFAFIEKQAAARFPDSDLVTKEYEIRIPGFRSPYKVNVFRAVYRSGFVVLTTVISMLMPFFNDVVGILGALGFWPLTVYFPVEMYIRQRKVERWSMKWVCLQMLSCGCLMITLVAGVGSIAGVMLDLKVYKPFKTTY</sequence>
<dbReference type="EMBL" id="X77500">
    <property type="protein sequence ID" value="CAA54631.1"/>
    <property type="molecule type" value="mRNA"/>
</dbReference>
<dbReference type="EMBL" id="AB007646">
    <property type="protein sequence ID" value="BAB11033.1"/>
    <property type="molecule type" value="Genomic_DNA"/>
</dbReference>
<dbReference type="EMBL" id="CP002688">
    <property type="protein sequence ID" value="AED97804.1"/>
    <property type="molecule type" value="Genomic_DNA"/>
</dbReference>
<dbReference type="EMBL" id="AY093224">
    <property type="protein sequence ID" value="AAM13223.1"/>
    <property type="molecule type" value="mRNA"/>
</dbReference>
<dbReference type="EMBL" id="BT003395">
    <property type="protein sequence ID" value="AAO30058.1"/>
    <property type="molecule type" value="mRNA"/>
</dbReference>
<dbReference type="EMBL" id="AY084749">
    <property type="protein sequence ID" value="AAM61320.1"/>
    <property type="molecule type" value="mRNA"/>
</dbReference>
<dbReference type="PIR" id="B57479">
    <property type="entry name" value="B57479"/>
</dbReference>
<dbReference type="RefSeq" id="NP_201190.1">
    <property type="nucleotide sequence ID" value="NM_125780.3"/>
</dbReference>
<dbReference type="BioGRID" id="21747">
    <property type="interactions" value="6"/>
</dbReference>
<dbReference type="FunCoup" id="Q9FN04">
    <property type="interactions" value="4"/>
</dbReference>
<dbReference type="IntAct" id="Q9FN04">
    <property type="interactions" value="4"/>
</dbReference>
<dbReference type="STRING" id="3702.Q9FN04"/>
<dbReference type="PaxDb" id="3702-AT5G63850.1"/>
<dbReference type="ProteomicsDB" id="244561"/>
<dbReference type="EnsemblPlants" id="AT5G63850.1">
    <property type="protein sequence ID" value="AT5G63850.1"/>
    <property type="gene ID" value="AT5G63850"/>
</dbReference>
<dbReference type="GeneID" id="836505"/>
<dbReference type="Gramene" id="AT5G63850.1">
    <property type="protein sequence ID" value="AT5G63850.1"/>
    <property type="gene ID" value="AT5G63850"/>
</dbReference>
<dbReference type="KEGG" id="ath:AT5G63850"/>
<dbReference type="Araport" id="AT5G63850"/>
<dbReference type="TAIR" id="AT5G63850">
    <property type="gene designation" value="AAP4"/>
</dbReference>
<dbReference type="eggNOG" id="KOG1303">
    <property type="taxonomic scope" value="Eukaryota"/>
</dbReference>
<dbReference type="HOGENOM" id="CLU_031247_4_1_1"/>
<dbReference type="InParanoid" id="Q9FN04"/>
<dbReference type="OMA" id="MGCLMIS"/>
<dbReference type="OrthoDB" id="40134at2759"/>
<dbReference type="PhylomeDB" id="Q9FN04"/>
<dbReference type="PRO" id="PR:Q9FN04"/>
<dbReference type="Proteomes" id="UP000006548">
    <property type="component" value="Chromosome 5"/>
</dbReference>
<dbReference type="ExpressionAtlas" id="Q9FN04">
    <property type="expression patterns" value="baseline and differential"/>
</dbReference>
<dbReference type="GO" id="GO:0005886">
    <property type="term" value="C:plasma membrane"/>
    <property type="evidence" value="ECO:0007669"/>
    <property type="project" value="UniProtKB-SubCell"/>
</dbReference>
<dbReference type="GO" id="GO:0015172">
    <property type="term" value="F:acidic amino acid transmembrane transporter activity"/>
    <property type="evidence" value="ECO:0000314"/>
    <property type="project" value="TAIR"/>
</dbReference>
<dbReference type="GO" id="GO:0015175">
    <property type="term" value="F:neutral L-amino acid transmembrane transporter activity"/>
    <property type="evidence" value="ECO:0000314"/>
    <property type="project" value="TAIR"/>
</dbReference>
<dbReference type="GO" id="GO:0015399">
    <property type="term" value="F:primary active transmembrane transporter activity"/>
    <property type="evidence" value="ECO:0000314"/>
    <property type="project" value="TAIR"/>
</dbReference>
<dbReference type="GO" id="GO:0015293">
    <property type="term" value="F:symporter activity"/>
    <property type="evidence" value="ECO:0007669"/>
    <property type="project" value="UniProtKB-KW"/>
</dbReference>
<dbReference type="GO" id="GO:0006865">
    <property type="term" value="P:amino acid transport"/>
    <property type="evidence" value="ECO:0000304"/>
    <property type="project" value="TAIR"/>
</dbReference>
<dbReference type="FunFam" id="1.20.1740.10:FF:000055">
    <property type="entry name" value="Amino acid permease 6"/>
    <property type="match status" value="1"/>
</dbReference>
<dbReference type="InterPro" id="IPR013057">
    <property type="entry name" value="AA_transpt_TM"/>
</dbReference>
<dbReference type="PANTHER" id="PTHR48017">
    <property type="entry name" value="OS05G0424000 PROTEIN-RELATED"/>
    <property type="match status" value="1"/>
</dbReference>
<dbReference type="Pfam" id="PF01490">
    <property type="entry name" value="Aa_trans"/>
    <property type="match status" value="1"/>
</dbReference>
<comment type="function">
    <text evidence="2">Amino acid-proton symporter. Stereospecific transporter with a broad specificity for neutral amino acids, favoring small amino acids such as alanine, asparagine and glutamine. Also accepts large aromatic residues such as in phenlalanine or tyrosine.</text>
</comment>
<comment type="activity regulation">
    <text evidence="2">Inhibited by 2,4-dinitrophenol.</text>
</comment>
<comment type="subcellular location">
    <subcellularLocation>
        <location evidence="4">Cell membrane</location>
        <topology evidence="4">Multi-pass membrane protein</topology>
    </subcellularLocation>
</comment>
<comment type="tissue specificity">
    <text evidence="2">Expressed in leaves, stems and flowers.</text>
</comment>
<comment type="developmental stage">
    <text evidence="2">High expression in source leaves, but almost undetected in sink leaves.</text>
</comment>
<comment type="induction">
    <text evidence="3">Down-regulated by drought.</text>
</comment>
<comment type="similarity">
    <text evidence="4">Belongs to the amino acid/polyamine transporter 2 family. Amino acid/auxin permease (AAAP) (TC 2.A.18.2) subfamily.</text>
</comment>
<organism>
    <name type="scientific">Arabidopsis thaliana</name>
    <name type="common">Mouse-ear cress</name>
    <dbReference type="NCBI Taxonomy" id="3702"/>
    <lineage>
        <taxon>Eukaryota</taxon>
        <taxon>Viridiplantae</taxon>
        <taxon>Streptophyta</taxon>
        <taxon>Embryophyta</taxon>
        <taxon>Tracheophyta</taxon>
        <taxon>Spermatophyta</taxon>
        <taxon>Magnoliopsida</taxon>
        <taxon>eudicotyledons</taxon>
        <taxon>Gunneridae</taxon>
        <taxon>Pentapetalae</taxon>
        <taxon>rosids</taxon>
        <taxon>malvids</taxon>
        <taxon>Brassicales</taxon>
        <taxon>Brassicaceae</taxon>
        <taxon>Camelineae</taxon>
        <taxon>Arabidopsis</taxon>
    </lineage>
</organism>
<protein>
    <recommendedName>
        <fullName>Amino acid permease 4</fullName>
    </recommendedName>
    <alternativeName>
        <fullName>Amino acid transporter AAP4</fullName>
    </alternativeName>
</protein>
<feature type="chain" id="PRO_0000387502" description="Amino acid permease 4">
    <location>
        <begin position="1"/>
        <end position="466"/>
    </location>
</feature>
<feature type="topological domain" description="Cytoplasmic" evidence="1">
    <location>
        <begin position="1"/>
        <end position="22"/>
    </location>
</feature>
<feature type="transmembrane region" description="Helical" evidence="1">
    <location>
        <begin position="23"/>
        <end position="43"/>
    </location>
</feature>
<feature type="transmembrane region" description="Helical" evidence="1">
    <location>
        <begin position="44"/>
        <end position="64"/>
    </location>
</feature>
<feature type="topological domain" description="Cytoplasmic" evidence="1">
    <location>
        <begin position="65"/>
        <end position="111"/>
    </location>
</feature>
<feature type="transmembrane region" description="Helical" evidence="1">
    <location>
        <begin position="112"/>
        <end position="132"/>
    </location>
</feature>
<feature type="topological domain" description="Extracellular" evidence="1">
    <location>
        <begin position="133"/>
        <end position="177"/>
    </location>
</feature>
<feature type="transmembrane region" description="Helical" evidence="1">
    <location>
        <begin position="178"/>
        <end position="198"/>
    </location>
</feature>
<feature type="topological domain" description="Cytoplasmic" evidence="1">
    <location>
        <begin position="199"/>
        <end position="226"/>
    </location>
</feature>
<feature type="transmembrane region" description="Helical" evidence="1">
    <location>
        <begin position="227"/>
        <end position="247"/>
    </location>
</feature>
<feature type="topological domain" description="Extracellular" evidence="1">
    <location>
        <begin position="248"/>
        <end position="266"/>
    </location>
</feature>
<feature type="transmembrane region" description="Helical" evidence="1">
    <location>
        <begin position="267"/>
        <end position="287"/>
    </location>
</feature>
<feature type="topological domain" description="Cytoplasmic" evidence="1">
    <location>
        <begin position="288"/>
        <end position="290"/>
    </location>
</feature>
<feature type="transmembrane region" description="Helical" evidence="1">
    <location>
        <begin position="291"/>
        <end position="311"/>
    </location>
</feature>
<feature type="topological domain" description="Extracellular" evidence="1">
    <location>
        <begin position="312"/>
        <end position="313"/>
    </location>
</feature>
<feature type="transmembrane region" description="Helical" evidence="1">
    <location>
        <begin position="314"/>
        <end position="334"/>
    </location>
</feature>
<feature type="topological domain" description="Cytoplasmic" evidence="1">
    <location>
        <begin position="335"/>
        <end position="369"/>
    </location>
</feature>
<feature type="transmembrane region" description="Helical" evidence="1">
    <location>
        <begin position="370"/>
        <end position="390"/>
    </location>
</feature>
<feature type="topological domain" description="Extracellular" evidence="1">
    <location>
        <begin position="391"/>
        <end position="392"/>
    </location>
</feature>
<feature type="transmembrane region" description="Helical" evidence="1">
    <location>
        <begin position="393"/>
        <end position="413"/>
    </location>
</feature>
<feature type="topological domain" description="Cytoplasmic" evidence="1">
    <location>
        <begin position="414"/>
        <end position="435"/>
    </location>
</feature>
<feature type="transmembrane region" description="Helical" evidence="1">
    <location>
        <begin position="436"/>
        <end position="456"/>
    </location>
</feature>
<feature type="topological domain" description="Extracellular" evidence="1">
    <location>
        <begin position="457"/>
        <end position="466"/>
    </location>
</feature>
<feature type="sequence conflict" description="In Ref. 1; CAA54631." evidence="4" ref="1">
    <original>A</original>
    <variation>L</variation>
    <location>
        <position position="338"/>
    </location>
</feature>
<feature type="sequence conflict" description="In Ref. 4; AAO30058/AAM13223." evidence="4" ref="4">
    <original>R</original>
    <variation>S</variation>
    <location>
        <position position="341"/>
    </location>
</feature>
<accession>Q9FN04</accession>
<accession>Q39135</accession>
<accession>Q8LFM7</accession>
<accession>Q8RWA8</accession>
<gene>
    <name type="primary">AAP4</name>
    <name type="ordered locus">At5g63850</name>
    <name type="ORF">MGI19.5</name>
</gene>
<keyword id="KW-0029">Amino-acid transport</keyword>
<keyword id="KW-1003">Cell membrane</keyword>
<keyword id="KW-0472">Membrane</keyword>
<keyword id="KW-1185">Reference proteome</keyword>
<keyword id="KW-0769">Symport</keyword>
<keyword id="KW-0812">Transmembrane</keyword>
<keyword id="KW-1133">Transmembrane helix</keyword>
<keyword id="KW-0813">Transport</keyword>
<reference key="1">
    <citation type="journal article" date="1995" name="J. Biol. Chem.">
        <title>Substrate specificity and expression profile of amino acid transporters (AAPs) in Arabidopsis.</title>
        <authorList>
            <person name="Fischer W.-N."/>
            <person name="Kwart M."/>
            <person name="Hummel S."/>
            <person name="Frommer W.B."/>
        </authorList>
    </citation>
    <scope>NUCLEOTIDE SEQUENCE [MRNA]</scope>
    <scope>FUNCTION</scope>
    <scope>ACTIVITY REGULATION</scope>
    <scope>DEVELOPMENTAL STAGE</scope>
    <scope>TISSUE SPECIFICITY</scope>
    <source>
        <strain>cv. Landsberg erecta</strain>
    </source>
</reference>
<reference key="2">
    <citation type="journal article" date="1997" name="DNA Res.">
        <title>Structural analysis of Arabidopsis thaliana chromosome 5. III. Sequence features of the regions of 1,191,918 bp covered by seventeen physically assigned P1 clones.</title>
        <authorList>
            <person name="Nakamura Y."/>
            <person name="Sato S."/>
            <person name="Kaneko T."/>
            <person name="Kotani H."/>
            <person name="Asamizu E."/>
            <person name="Miyajima N."/>
            <person name="Tabata S."/>
        </authorList>
    </citation>
    <scope>NUCLEOTIDE SEQUENCE [LARGE SCALE GENOMIC DNA]</scope>
    <source>
        <strain>cv. Columbia</strain>
    </source>
</reference>
<reference key="3">
    <citation type="journal article" date="2017" name="Plant J.">
        <title>Araport11: a complete reannotation of the Arabidopsis thaliana reference genome.</title>
        <authorList>
            <person name="Cheng C.Y."/>
            <person name="Krishnakumar V."/>
            <person name="Chan A.P."/>
            <person name="Thibaud-Nissen F."/>
            <person name="Schobel S."/>
            <person name="Town C.D."/>
        </authorList>
    </citation>
    <scope>GENOME REANNOTATION</scope>
    <source>
        <strain>cv. Columbia</strain>
    </source>
</reference>
<reference key="4">
    <citation type="journal article" date="2003" name="Science">
        <title>Empirical analysis of transcriptional activity in the Arabidopsis genome.</title>
        <authorList>
            <person name="Yamada K."/>
            <person name="Lim J."/>
            <person name="Dale J.M."/>
            <person name="Chen H."/>
            <person name="Shinn P."/>
            <person name="Palm C.J."/>
            <person name="Southwick A.M."/>
            <person name="Wu H.C."/>
            <person name="Kim C.J."/>
            <person name="Nguyen M."/>
            <person name="Pham P.K."/>
            <person name="Cheuk R.F."/>
            <person name="Karlin-Newmann G."/>
            <person name="Liu S.X."/>
            <person name="Lam B."/>
            <person name="Sakano H."/>
            <person name="Wu T."/>
            <person name="Yu G."/>
            <person name="Miranda M."/>
            <person name="Quach H.L."/>
            <person name="Tripp M."/>
            <person name="Chang C.H."/>
            <person name="Lee J.M."/>
            <person name="Toriumi M.J."/>
            <person name="Chan M.M."/>
            <person name="Tang C.C."/>
            <person name="Onodera C.S."/>
            <person name="Deng J.M."/>
            <person name="Akiyama K."/>
            <person name="Ansari Y."/>
            <person name="Arakawa T."/>
            <person name="Banh J."/>
            <person name="Banno F."/>
            <person name="Bowser L."/>
            <person name="Brooks S.Y."/>
            <person name="Carninci P."/>
            <person name="Chao Q."/>
            <person name="Choy N."/>
            <person name="Enju A."/>
            <person name="Goldsmith A.D."/>
            <person name="Gurjal M."/>
            <person name="Hansen N.F."/>
            <person name="Hayashizaki Y."/>
            <person name="Johnson-Hopson C."/>
            <person name="Hsuan V.W."/>
            <person name="Iida K."/>
            <person name="Karnes M."/>
            <person name="Khan S."/>
            <person name="Koesema E."/>
            <person name="Ishida J."/>
            <person name="Jiang P.X."/>
            <person name="Jones T."/>
            <person name="Kawai J."/>
            <person name="Kamiya A."/>
            <person name="Meyers C."/>
            <person name="Nakajima M."/>
            <person name="Narusaka M."/>
            <person name="Seki M."/>
            <person name="Sakurai T."/>
            <person name="Satou M."/>
            <person name="Tamse R."/>
            <person name="Vaysberg M."/>
            <person name="Wallender E.K."/>
            <person name="Wong C."/>
            <person name="Yamamura Y."/>
            <person name="Yuan S."/>
            <person name="Shinozaki K."/>
            <person name="Davis R.W."/>
            <person name="Theologis A."/>
            <person name="Ecker J.R."/>
        </authorList>
    </citation>
    <scope>NUCLEOTIDE SEQUENCE [LARGE SCALE MRNA]</scope>
    <source>
        <strain>cv. Columbia</strain>
    </source>
</reference>
<reference key="5">
    <citation type="submission" date="2002-03" db="EMBL/GenBank/DDBJ databases">
        <title>Full-length cDNA from Arabidopsis thaliana.</title>
        <authorList>
            <person name="Brover V.V."/>
            <person name="Troukhan M.E."/>
            <person name="Alexandrov N.A."/>
            <person name="Lu Y.-P."/>
            <person name="Flavell R.B."/>
            <person name="Feldmann K.A."/>
        </authorList>
    </citation>
    <scope>NUCLEOTIDE SEQUENCE [LARGE SCALE MRNA]</scope>
</reference>
<reference key="6">
    <citation type="journal article" date="1996" name="Plant Cell">
        <title>Salt stress-induced proline transporters and salt stress-repressed broad specificity amino acid permeases identified by suppression of a yeast amino acid permease-targeting mutant.</title>
        <authorList>
            <person name="Rentsch D."/>
            <person name="Hirner B."/>
            <person name="Schmelzer E."/>
            <person name="Frommer W.B."/>
        </authorList>
    </citation>
    <scope>INDUCTION</scope>
    <source>
        <strain>cv. Landsberg erecta</strain>
    </source>
</reference>
<reference key="7">
    <citation type="journal article" date="2002" name="Plant J.">
        <title>Low and high affinity amino acid H+-cotransporters for cellular import of neutral and charged amino acids.</title>
        <authorList>
            <person name="Fischer W.-N."/>
            <person name="Loo D.D.F."/>
            <person name="Koch W."/>
            <person name="Ludewig U."/>
            <person name="Boorer K.J."/>
            <person name="Tegeder M."/>
            <person name="Rentsch D."/>
            <person name="Wright E.M."/>
            <person name="Frommer W.B."/>
        </authorList>
    </citation>
    <scope>CHARACTERIZATION</scope>
</reference>
<proteinExistence type="evidence at protein level"/>
<name>AAP4_ARATH</name>